<proteinExistence type="inferred from homology"/>
<feature type="chain" id="PRO_0000070542" description="Photosystem II reaction center protein H">
    <location>
        <begin position="1"/>
        <end position="64"/>
    </location>
</feature>
<feature type="transmembrane region" description="Helical" evidence="1">
    <location>
        <begin position="29"/>
        <end position="49"/>
    </location>
</feature>
<comment type="function">
    <text evidence="1">One of the components of the core complex of photosystem II (PSII), required for its stability and/or assembly. PSII is a light-driven water:plastoquinone oxidoreductase that uses light energy to abstract electrons from H(2)O, generating O(2) and a proton gradient subsequently used for ATP formation. It consists of a core antenna complex that captures photons, and an electron transfer chain that converts photonic excitation into a charge separation.</text>
</comment>
<comment type="subunit">
    <text evidence="1">PSII is composed of 1 copy each of membrane proteins PsbA, PsbB, PsbC, PsbD, PsbE, PsbF, PsbH, PsbI, PsbJ, PsbK, PsbL, PsbM, PsbT, PsbX, PsbY, PsbZ, Psb30/Ycf12, peripheral proteins PsbO, CyanoQ (PsbQ), PsbU, PsbV and a large number of cofactors. It forms dimeric complexes.</text>
</comment>
<comment type="subcellular location">
    <subcellularLocation>
        <location evidence="1">Cellular thylakoid membrane</location>
        <topology evidence="1">Single-pass membrane protein</topology>
    </subcellularLocation>
</comment>
<comment type="similarity">
    <text evidence="1">Belongs to the PsbH family.</text>
</comment>
<comment type="sequence caution" evidence="2">
    <conflict type="erroneous initiation">
        <sequence resource="EMBL-CDS" id="CAA42862"/>
    </conflict>
    <text>Extended N-terminus.</text>
</comment>
<keyword id="KW-0472">Membrane</keyword>
<keyword id="KW-0602">Photosynthesis</keyword>
<keyword id="KW-0604">Photosystem II</keyword>
<keyword id="KW-0793">Thylakoid</keyword>
<keyword id="KW-0812">Transmembrane</keyword>
<keyword id="KW-1133">Transmembrane helix</keyword>
<dbReference type="EMBL" id="X60314">
    <property type="protein sequence ID" value="CAA42862.1"/>
    <property type="status" value="ALT_INIT"/>
    <property type="molecule type" value="Genomic_DNA"/>
</dbReference>
<dbReference type="EMBL" id="X60314">
    <property type="protein sequence ID" value="CAA42863.1"/>
    <property type="molecule type" value="Genomic_DNA"/>
</dbReference>
<dbReference type="PIR" id="S22473">
    <property type="entry name" value="S16854"/>
</dbReference>
<dbReference type="SMR" id="P31095"/>
<dbReference type="GO" id="GO:0009523">
    <property type="term" value="C:photosystem II"/>
    <property type="evidence" value="ECO:0007669"/>
    <property type="project" value="UniProtKB-KW"/>
</dbReference>
<dbReference type="GO" id="GO:0031676">
    <property type="term" value="C:plasma membrane-derived thylakoid membrane"/>
    <property type="evidence" value="ECO:0007669"/>
    <property type="project" value="UniProtKB-SubCell"/>
</dbReference>
<dbReference type="GO" id="GO:0042301">
    <property type="term" value="F:phosphate ion binding"/>
    <property type="evidence" value="ECO:0007669"/>
    <property type="project" value="InterPro"/>
</dbReference>
<dbReference type="GO" id="GO:0015979">
    <property type="term" value="P:photosynthesis"/>
    <property type="evidence" value="ECO:0007669"/>
    <property type="project" value="UniProtKB-UniRule"/>
</dbReference>
<dbReference type="GO" id="GO:0050821">
    <property type="term" value="P:protein stabilization"/>
    <property type="evidence" value="ECO:0007669"/>
    <property type="project" value="InterPro"/>
</dbReference>
<dbReference type="Gene3D" id="1.20.5.880">
    <property type="entry name" value="Photosystem II reaction center protein H"/>
    <property type="match status" value="1"/>
</dbReference>
<dbReference type="HAMAP" id="MF_00752">
    <property type="entry name" value="PSII_PsbH"/>
    <property type="match status" value="1"/>
</dbReference>
<dbReference type="InterPro" id="IPR001056">
    <property type="entry name" value="PSII_PsbH"/>
</dbReference>
<dbReference type="InterPro" id="IPR036863">
    <property type="entry name" value="PSII_PsbH_sf"/>
</dbReference>
<dbReference type="NCBIfam" id="NF002728">
    <property type="entry name" value="PRK02624.1"/>
    <property type="match status" value="1"/>
</dbReference>
<dbReference type="PANTHER" id="PTHR34469">
    <property type="entry name" value="PHOTOSYSTEM II REACTION CENTER PROTEIN H"/>
    <property type="match status" value="1"/>
</dbReference>
<dbReference type="PANTHER" id="PTHR34469:SF4">
    <property type="entry name" value="PHOTOSYSTEM II REACTION CENTER PROTEIN H"/>
    <property type="match status" value="1"/>
</dbReference>
<dbReference type="Pfam" id="PF00737">
    <property type="entry name" value="PsbH"/>
    <property type="match status" value="1"/>
</dbReference>
<dbReference type="SUPFAM" id="SSF161025">
    <property type="entry name" value="Photosystem II 10 kDa phosphoprotein PsbH"/>
    <property type="match status" value="1"/>
</dbReference>
<protein>
    <recommendedName>
        <fullName evidence="1">Photosystem II reaction center protein H</fullName>
        <shortName evidence="1">PSII-H</shortName>
    </recommendedName>
</protein>
<sequence>MGQKTALSNFLKPFNSNAGKVVPGWGTTPLMGLFMGLLFVFLLIILQIYNSTIVLDAFSVNVGG</sequence>
<gene>
    <name evidence="1" type="primary">psbH</name>
</gene>
<organism>
    <name type="scientific">Prochlorothrix hollandica</name>
    <dbReference type="NCBI Taxonomy" id="1223"/>
    <lineage>
        <taxon>Bacteria</taxon>
        <taxon>Bacillati</taxon>
        <taxon>Cyanobacteriota</taxon>
        <taxon>Cyanophyceae</taxon>
        <taxon>Prochlorotrichales</taxon>
        <taxon>Prochlorotrichaceae</taxon>
        <taxon>Prochlorothrix</taxon>
    </lineage>
</organism>
<reference key="1">
    <citation type="journal article" date="1992" name="Plant Mol. Biol.">
        <title>Conserved relationship between psbH and petBD genes: presence of a shared upstream element in Prochlorothrix hollandica.</title>
        <authorList>
            <person name="Greer K.L."/>
            <person name="Golden S.S."/>
        </authorList>
    </citation>
    <scope>NUCLEOTIDE SEQUENCE [GENOMIC DNA]</scope>
</reference>
<evidence type="ECO:0000255" key="1">
    <source>
        <dbReference type="HAMAP-Rule" id="MF_00752"/>
    </source>
</evidence>
<evidence type="ECO:0000305" key="2"/>
<accession>P31095</accession>
<name>PSBH_PROHO</name>